<sequence>MGAPGAAEARERIRRGEHAGPTAGLAPGYAQANLVILPEEHALDFLRFCVRNPKPCPLLEVTDTGSPVPRTLAPGADLRTDVPRYRVYERGKLVEEPADILPRWRGDLVCFLLGCSFTFERALLAAGLRLAHVEQGRNVPMYVTNRRCAPSGPFAGPLVVSMRPYRPEEVPRAVSVSARYPAMHGAPVHVGRPEALGIKDLGRPDFGDAVILGEGEIPVFWACGVTPQAVALQAGLPLVITHSPGHMFVTDRRDAEYEV</sequence>
<dbReference type="EC" id="4.2.1.-" evidence="1"/>
<dbReference type="EMBL" id="CP000386">
    <property type="protein sequence ID" value="ABG05337.1"/>
    <property type="molecule type" value="Genomic_DNA"/>
</dbReference>
<dbReference type="RefSeq" id="WP_011565350.1">
    <property type="nucleotide sequence ID" value="NC_008148.1"/>
</dbReference>
<dbReference type="SMR" id="Q1ATE1"/>
<dbReference type="STRING" id="266117.Rxyl_2409"/>
<dbReference type="KEGG" id="rxy:Rxyl_2409"/>
<dbReference type="eggNOG" id="COG4336">
    <property type="taxonomic scope" value="Bacteria"/>
</dbReference>
<dbReference type="HOGENOM" id="CLU_059759_0_0_11"/>
<dbReference type="OrthoDB" id="149585at2"/>
<dbReference type="PhylomeDB" id="Q1ATE1"/>
<dbReference type="Proteomes" id="UP000006637">
    <property type="component" value="Chromosome"/>
</dbReference>
<dbReference type="GO" id="GO:0016829">
    <property type="term" value="F:lyase activity"/>
    <property type="evidence" value="ECO:0007669"/>
    <property type="project" value="UniProtKB-KW"/>
</dbReference>
<dbReference type="FunFam" id="3.30.2040.10:FF:000001">
    <property type="entry name" value="D-glutamate cyclase, mitochondrial"/>
    <property type="match status" value="1"/>
</dbReference>
<dbReference type="Gene3D" id="3.40.1640.10">
    <property type="entry name" value="PSTPO5379-like"/>
    <property type="match status" value="1"/>
</dbReference>
<dbReference type="Gene3D" id="3.30.2040.10">
    <property type="entry name" value="PSTPO5379-like domain"/>
    <property type="match status" value="1"/>
</dbReference>
<dbReference type="HAMAP" id="MF_01830">
    <property type="entry name" value="Hydro_lyase"/>
    <property type="match status" value="1"/>
</dbReference>
<dbReference type="InterPro" id="IPR009906">
    <property type="entry name" value="D-Glu_cyclase"/>
</dbReference>
<dbReference type="InterPro" id="IPR038021">
    <property type="entry name" value="Putative_hydro-lyase"/>
</dbReference>
<dbReference type="InterPro" id="IPR016938">
    <property type="entry name" value="UPF0317"/>
</dbReference>
<dbReference type="NCBIfam" id="NF003969">
    <property type="entry name" value="PRK05463.1"/>
    <property type="match status" value="1"/>
</dbReference>
<dbReference type="PANTHER" id="PTHR32022">
    <property type="entry name" value="D-GLUTAMATE CYCLASE, MITOCHONDRIAL"/>
    <property type="match status" value="1"/>
</dbReference>
<dbReference type="PANTHER" id="PTHR32022:SF10">
    <property type="entry name" value="D-GLUTAMATE CYCLASE, MITOCHONDRIAL"/>
    <property type="match status" value="1"/>
</dbReference>
<dbReference type="Pfam" id="PF07286">
    <property type="entry name" value="D-Glu_cyclase"/>
    <property type="match status" value="1"/>
</dbReference>
<dbReference type="PIRSF" id="PIRSF029755">
    <property type="entry name" value="UCP029755"/>
    <property type="match status" value="1"/>
</dbReference>
<dbReference type="SUPFAM" id="SSF160920">
    <property type="entry name" value="PSTPO5379-like"/>
    <property type="match status" value="1"/>
</dbReference>
<protein>
    <recommendedName>
        <fullName evidence="1">Putative hydro-lyase Rxyl_2409</fullName>
        <ecNumber evidence="1">4.2.1.-</ecNumber>
    </recommendedName>
</protein>
<proteinExistence type="inferred from homology"/>
<evidence type="ECO:0000255" key="1">
    <source>
        <dbReference type="HAMAP-Rule" id="MF_01830"/>
    </source>
</evidence>
<evidence type="ECO:0000256" key="2">
    <source>
        <dbReference type="SAM" id="MobiDB-lite"/>
    </source>
</evidence>
<name>Y2409_RUBXD</name>
<accession>Q1ATE1</accession>
<feature type="chain" id="PRO_0000379862" description="Putative hydro-lyase Rxyl_2409">
    <location>
        <begin position="1"/>
        <end position="259"/>
    </location>
</feature>
<feature type="region of interest" description="Disordered" evidence="2">
    <location>
        <begin position="1"/>
        <end position="24"/>
    </location>
</feature>
<feature type="compositionally biased region" description="Basic and acidic residues" evidence="2">
    <location>
        <begin position="8"/>
        <end position="18"/>
    </location>
</feature>
<gene>
    <name type="ordered locus">Rxyl_2409</name>
</gene>
<comment type="similarity">
    <text evidence="1">Belongs to the D-glutamate cyclase family.</text>
</comment>
<reference key="1">
    <citation type="submission" date="2006-06" db="EMBL/GenBank/DDBJ databases">
        <title>Complete sequence of Rubrobacter xylanophilus DSM 9941.</title>
        <authorList>
            <consortium name="US DOE Joint Genome Institute"/>
            <person name="Copeland A."/>
            <person name="Lucas S."/>
            <person name="Lapidus A."/>
            <person name="Barry K."/>
            <person name="Detter J.C."/>
            <person name="Glavina del Rio T."/>
            <person name="Hammon N."/>
            <person name="Israni S."/>
            <person name="Dalin E."/>
            <person name="Tice H."/>
            <person name="Pitluck S."/>
            <person name="Munk A.C."/>
            <person name="Brettin T."/>
            <person name="Bruce D."/>
            <person name="Han C."/>
            <person name="Tapia R."/>
            <person name="Gilna P."/>
            <person name="Schmutz J."/>
            <person name="Larimer F."/>
            <person name="Land M."/>
            <person name="Hauser L."/>
            <person name="Kyrpides N."/>
            <person name="Lykidis A."/>
            <person name="da Costa M.S."/>
            <person name="Rainey F.A."/>
            <person name="Empadinhas N."/>
            <person name="Jolivet E."/>
            <person name="Battista J.R."/>
            <person name="Richardson P."/>
        </authorList>
    </citation>
    <scope>NUCLEOTIDE SEQUENCE [LARGE SCALE GENOMIC DNA]</scope>
    <source>
        <strain>DSM 9941 / JCM 11954 / NBRC 16129 / PRD-1</strain>
    </source>
</reference>
<keyword id="KW-0456">Lyase</keyword>
<keyword id="KW-1185">Reference proteome</keyword>
<organism>
    <name type="scientific">Rubrobacter xylanophilus (strain DSM 9941 / JCM 11954 / NBRC 16129 / PRD-1)</name>
    <dbReference type="NCBI Taxonomy" id="266117"/>
    <lineage>
        <taxon>Bacteria</taxon>
        <taxon>Bacillati</taxon>
        <taxon>Actinomycetota</taxon>
        <taxon>Rubrobacteria</taxon>
        <taxon>Rubrobacterales</taxon>
        <taxon>Rubrobacteraceae</taxon>
        <taxon>Rubrobacter</taxon>
    </lineage>
</organism>